<sequence>MALRLGLFLIWAGVSMFLQLDPVNGDEQLSEDNVILPKEKKDPASGAETKDNKCVFPFIYGNKKYFDCTLHGSLFLWCSLDADYTGRWKYCTKNDYAKCVFPFIYEGKSYDTCIIIGSTFMNYWCSLSSNYDEDGVWKYC</sequence>
<keyword id="KW-0903">Direct protein sequencing</keyword>
<keyword id="KW-1015">Disulfide bond</keyword>
<keyword id="KW-0278">Fertilization</keyword>
<keyword id="KW-1185">Reference proteome</keyword>
<keyword id="KW-0677">Repeat</keyword>
<keyword id="KW-0964">Secreted</keyword>
<keyword id="KW-0732">Signal</keyword>
<organism>
    <name type="scientific">Bos taurus</name>
    <name type="common">Bovine</name>
    <dbReference type="NCBI Taxonomy" id="9913"/>
    <lineage>
        <taxon>Eukaryota</taxon>
        <taxon>Metazoa</taxon>
        <taxon>Chordata</taxon>
        <taxon>Craniata</taxon>
        <taxon>Vertebrata</taxon>
        <taxon>Euteleostomi</taxon>
        <taxon>Mammalia</taxon>
        <taxon>Eutheria</taxon>
        <taxon>Laurasiatheria</taxon>
        <taxon>Artiodactyla</taxon>
        <taxon>Ruminantia</taxon>
        <taxon>Pecora</taxon>
        <taxon>Bovidae</taxon>
        <taxon>Bovinae</taxon>
        <taxon>Bos</taxon>
    </lineage>
</organism>
<feature type="signal peptide" evidence="2">
    <location>
        <begin position="1"/>
        <end position="25"/>
    </location>
</feature>
<feature type="chain" id="PRO_0000019232" description="Seminal plasma protein A3">
    <location>
        <begin position="26"/>
        <end position="140"/>
    </location>
</feature>
<feature type="domain" description="Fibronectin type-II 1" evidence="1">
    <location>
        <begin position="49"/>
        <end position="93"/>
    </location>
</feature>
<feature type="domain" description="Fibronectin type-II 2" evidence="1">
    <location>
        <begin position="94"/>
        <end position="140"/>
    </location>
</feature>
<feature type="disulfide bond" evidence="1">
    <location>
        <begin position="54"/>
        <end position="78"/>
    </location>
</feature>
<feature type="disulfide bond" evidence="1">
    <location>
        <begin position="68"/>
        <end position="91"/>
    </location>
</feature>
<feature type="disulfide bond" evidence="1">
    <location>
        <begin position="99"/>
        <end position="125"/>
    </location>
</feature>
<feature type="disulfide bond" evidence="1">
    <location>
        <begin position="113"/>
        <end position="140"/>
    </location>
</feature>
<feature type="sequence conflict" description="In Ref. 2; AA sequence." evidence="3" ref="2">
    <original>E</original>
    <variation>Q</variation>
    <location>
        <position position="27"/>
    </location>
</feature>
<feature type="sequence conflict" description="In Ref. 2; AA sequence." evidence="3" ref="2">
    <original>I</original>
    <variation>K</variation>
    <location>
        <position position="115"/>
    </location>
</feature>
<name>SFP3_BOVIN</name>
<reference key="1">
    <citation type="journal article" date="1999" name="Biol. Reprod.">
        <title>Complementary deoxyribonucleic acid cloning and tissue expression of BSP-A3 and BSP-30-kDa: phosphatidylcholine and heparin-binding proteins of bovine seminal plasma.</title>
        <authorList>
            <person name="Salois D."/>
            <person name="Menard M."/>
            <person name="Paquette Y."/>
            <person name="Manjunath P."/>
        </authorList>
    </citation>
    <scope>NUCLEOTIDE SEQUENCE [MRNA]</scope>
</reference>
<reference key="2">
    <citation type="journal article" date="1987" name="Biochem. J.">
        <title>Complete amino acid sequence of BSP-A3 from bovine seminal plasma. Homology to PDC-109 and to the collagen-binding domain of fibronectin.</title>
        <authorList>
            <person name="Seidah N.G."/>
            <person name="Manjunath P."/>
            <person name="Rochemont J."/>
            <person name="Sairam M.R."/>
            <person name="Chretien M."/>
        </authorList>
    </citation>
    <scope>PROTEIN SEQUENCE OF 26-140</scope>
    <source>
        <tissue>Seminal plasma</tissue>
    </source>
</reference>
<comment type="function">
    <text>The BSP-A proteins from seminal plasma exhibit both simulatory and inhibitory actions on the release of pituitary gonadotropins. The exact function of these proteins is not known.</text>
</comment>
<comment type="subcellular location">
    <subcellularLocation>
        <location>Secreted</location>
    </subcellularLocation>
</comment>
<comment type="similarity">
    <text evidence="3">Belongs to the seminal plasma protein family.</text>
</comment>
<proteinExistence type="evidence at protein level"/>
<evidence type="ECO:0000255" key="1">
    <source>
        <dbReference type="PROSITE-ProRule" id="PRU00479"/>
    </source>
</evidence>
<evidence type="ECO:0000269" key="2">
    <source>
    </source>
</evidence>
<evidence type="ECO:0000305" key="3"/>
<protein>
    <recommendedName>
        <fullName>Seminal plasma protein A3</fullName>
    </recommendedName>
    <alternativeName>
        <fullName>BSP-A3</fullName>
    </alternativeName>
</protein>
<accession>P04557</accession>
<accession>Q9TUE5</accession>
<dbReference type="EMBL" id="AF055981">
    <property type="protein sequence ID" value="AAF04405.1"/>
    <property type="molecule type" value="mRNA"/>
</dbReference>
<dbReference type="RefSeq" id="NP_777265.1">
    <property type="nucleotide sequence ID" value="NM_174840.1"/>
</dbReference>
<dbReference type="SMR" id="P04557"/>
<dbReference type="FunCoup" id="P04557">
    <property type="interactions" value="16"/>
</dbReference>
<dbReference type="STRING" id="9913.ENSBTAP00000005069"/>
<dbReference type="PaxDb" id="9913-ENSBTAP00000005069"/>
<dbReference type="Ensembl" id="ENSBTAT00000005069.2">
    <property type="protein sequence ID" value="ENSBTAP00000005069.1"/>
    <property type="gene ID" value="ENSBTAG00000003886.6"/>
</dbReference>
<dbReference type="GeneID" id="317695"/>
<dbReference type="KEGG" id="bta:317695"/>
<dbReference type="CTD" id="317695"/>
<dbReference type="VEuPathDB" id="HostDB:ENSBTAG00000003886"/>
<dbReference type="eggNOG" id="KOG1565">
    <property type="taxonomic scope" value="Eukaryota"/>
</dbReference>
<dbReference type="GeneTree" id="ENSGT00940000164580"/>
<dbReference type="HOGENOM" id="CLU_126630_0_0_1"/>
<dbReference type="InParanoid" id="P04557"/>
<dbReference type="OMA" id="KNDYAKC"/>
<dbReference type="OrthoDB" id="406838at2759"/>
<dbReference type="TreeFam" id="TF343543"/>
<dbReference type="Proteomes" id="UP000009136">
    <property type="component" value="Chromosome 18"/>
</dbReference>
<dbReference type="Bgee" id="ENSBTAG00000003886">
    <property type="expression patterns" value="Expressed in oviduct epithelium and 15 other cell types or tissues"/>
</dbReference>
<dbReference type="GO" id="GO:0009986">
    <property type="term" value="C:cell surface"/>
    <property type="evidence" value="ECO:0000318"/>
    <property type="project" value="GO_Central"/>
</dbReference>
<dbReference type="GO" id="GO:0005615">
    <property type="term" value="C:extracellular space"/>
    <property type="evidence" value="ECO:0000314"/>
    <property type="project" value="CAFA"/>
</dbReference>
<dbReference type="GO" id="GO:0008201">
    <property type="term" value="F:heparin binding"/>
    <property type="evidence" value="ECO:0000318"/>
    <property type="project" value="GO_Central"/>
</dbReference>
<dbReference type="GO" id="GO:0033700">
    <property type="term" value="P:phospholipid efflux"/>
    <property type="evidence" value="ECO:0000314"/>
    <property type="project" value="CAFA"/>
</dbReference>
<dbReference type="GO" id="GO:1902492">
    <property type="term" value="P:positive regulation of sperm capacitation"/>
    <property type="evidence" value="ECO:0000314"/>
    <property type="project" value="CAFA"/>
</dbReference>
<dbReference type="GO" id="GO:0007338">
    <property type="term" value="P:single fertilization"/>
    <property type="evidence" value="ECO:0007669"/>
    <property type="project" value="UniProtKB-KW"/>
</dbReference>
<dbReference type="GO" id="GO:0048240">
    <property type="term" value="P:sperm capacitation"/>
    <property type="evidence" value="ECO:0000318"/>
    <property type="project" value="GO_Central"/>
</dbReference>
<dbReference type="CDD" id="cd00062">
    <property type="entry name" value="FN2"/>
    <property type="match status" value="2"/>
</dbReference>
<dbReference type="FunFam" id="2.10.10.10:FF:000003">
    <property type="entry name" value="binder of sperm protein homolog 1"/>
    <property type="match status" value="1"/>
</dbReference>
<dbReference type="FunFam" id="2.10.10.10:FF:000005">
    <property type="entry name" value="Epididymal sperm binding protein 1"/>
    <property type="match status" value="1"/>
</dbReference>
<dbReference type="Gene3D" id="2.10.10.10">
    <property type="entry name" value="Fibronectin, type II, collagen-binding"/>
    <property type="match status" value="2"/>
</dbReference>
<dbReference type="InterPro" id="IPR000562">
    <property type="entry name" value="FN_type2_dom"/>
</dbReference>
<dbReference type="InterPro" id="IPR036943">
    <property type="entry name" value="FN_type2_sf"/>
</dbReference>
<dbReference type="InterPro" id="IPR013806">
    <property type="entry name" value="Kringle-like"/>
</dbReference>
<dbReference type="InterPro" id="IPR016356">
    <property type="entry name" value="Seminal_plasma_PDC-109-like"/>
</dbReference>
<dbReference type="InterPro" id="IPR051666">
    <property type="entry name" value="SP_Capacitation_Regulator"/>
</dbReference>
<dbReference type="PANTHER" id="PTHR22918">
    <property type="entry name" value="SEMINAL PLASMA PROTEIN"/>
    <property type="match status" value="1"/>
</dbReference>
<dbReference type="PANTHER" id="PTHR22918:SF3">
    <property type="entry name" value="SEMINAL PLASMA PROTEIN HSP-1"/>
    <property type="match status" value="1"/>
</dbReference>
<dbReference type="Pfam" id="PF00040">
    <property type="entry name" value="fn2"/>
    <property type="match status" value="2"/>
</dbReference>
<dbReference type="PIRSF" id="PIRSF002541">
    <property type="entry name" value="Seminal_plasma_PDC-109"/>
    <property type="match status" value="1"/>
</dbReference>
<dbReference type="PRINTS" id="PR00013">
    <property type="entry name" value="FNTYPEII"/>
</dbReference>
<dbReference type="SMART" id="SM00059">
    <property type="entry name" value="FN2"/>
    <property type="match status" value="2"/>
</dbReference>
<dbReference type="SUPFAM" id="SSF57440">
    <property type="entry name" value="Kringle-like"/>
    <property type="match status" value="2"/>
</dbReference>
<dbReference type="PROSITE" id="PS00023">
    <property type="entry name" value="FN2_1"/>
    <property type="match status" value="2"/>
</dbReference>
<dbReference type="PROSITE" id="PS51092">
    <property type="entry name" value="FN2_2"/>
    <property type="match status" value="2"/>
</dbReference>